<keyword id="KW-0240">DNA-directed RNA polymerase</keyword>
<keyword id="KW-0548">Nucleotidyltransferase</keyword>
<keyword id="KW-1185">Reference proteome</keyword>
<keyword id="KW-0804">Transcription</keyword>
<keyword id="KW-0808">Transferase</keyword>
<accession>Q5Z1K9</accession>
<protein>
    <recommendedName>
        <fullName evidence="1">DNA-directed RNA polymerase subunit alpha</fullName>
        <shortName evidence="1">RNAP subunit alpha</shortName>
        <ecNumber evidence="1">2.7.7.6</ecNumber>
    </recommendedName>
    <alternativeName>
        <fullName evidence="1">RNA polymerase subunit alpha</fullName>
    </alternativeName>
    <alternativeName>
        <fullName evidence="1">Transcriptase subunit alpha</fullName>
    </alternativeName>
</protein>
<gene>
    <name evidence="1" type="primary">rpoA</name>
    <name type="ordered locus">NFA_8370</name>
</gene>
<feature type="chain" id="PRO_0000175349" description="DNA-directed RNA polymerase subunit alpha">
    <location>
        <begin position="1"/>
        <end position="352"/>
    </location>
</feature>
<feature type="region of interest" description="Alpha N-terminal domain (alpha-NTD)" evidence="1">
    <location>
        <begin position="1"/>
        <end position="226"/>
    </location>
</feature>
<feature type="region of interest" description="Alpha C-terminal domain (alpha-CTD)" evidence="1">
    <location>
        <begin position="243"/>
        <end position="352"/>
    </location>
</feature>
<feature type="region of interest" description="Disordered" evidence="2">
    <location>
        <begin position="324"/>
        <end position="352"/>
    </location>
</feature>
<feature type="compositionally biased region" description="Polar residues" evidence="2">
    <location>
        <begin position="326"/>
        <end position="338"/>
    </location>
</feature>
<feature type="compositionally biased region" description="Acidic residues" evidence="2">
    <location>
        <begin position="340"/>
        <end position="352"/>
    </location>
</feature>
<reference key="1">
    <citation type="journal article" date="2004" name="Proc. Natl. Acad. Sci. U.S.A.">
        <title>The complete genomic sequence of Nocardia farcinica IFM 10152.</title>
        <authorList>
            <person name="Ishikawa J."/>
            <person name="Yamashita A."/>
            <person name="Mikami Y."/>
            <person name="Hoshino Y."/>
            <person name="Kurita H."/>
            <person name="Hotta K."/>
            <person name="Shiba T."/>
            <person name="Hattori M."/>
        </authorList>
    </citation>
    <scope>NUCLEOTIDE SEQUENCE [LARGE SCALE GENOMIC DNA]</scope>
    <source>
        <strain>IFM 10152</strain>
    </source>
</reference>
<proteinExistence type="inferred from homology"/>
<dbReference type="EC" id="2.7.7.6" evidence="1"/>
<dbReference type="EMBL" id="AP006618">
    <property type="protein sequence ID" value="BAD55682.1"/>
    <property type="molecule type" value="Genomic_DNA"/>
</dbReference>
<dbReference type="RefSeq" id="WP_011207367.1">
    <property type="nucleotide sequence ID" value="NC_006361.1"/>
</dbReference>
<dbReference type="SMR" id="Q5Z1K9"/>
<dbReference type="STRING" id="247156.NFA_8370"/>
<dbReference type="GeneID" id="61131665"/>
<dbReference type="KEGG" id="nfa:NFA_8370"/>
<dbReference type="eggNOG" id="COG0202">
    <property type="taxonomic scope" value="Bacteria"/>
</dbReference>
<dbReference type="HOGENOM" id="CLU_053084_0_1_11"/>
<dbReference type="OrthoDB" id="9805706at2"/>
<dbReference type="Proteomes" id="UP000006820">
    <property type="component" value="Chromosome"/>
</dbReference>
<dbReference type="GO" id="GO:0005737">
    <property type="term" value="C:cytoplasm"/>
    <property type="evidence" value="ECO:0007669"/>
    <property type="project" value="UniProtKB-ARBA"/>
</dbReference>
<dbReference type="GO" id="GO:0000428">
    <property type="term" value="C:DNA-directed RNA polymerase complex"/>
    <property type="evidence" value="ECO:0007669"/>
    <property type="project" value="UniProtKB-KW"/>
</dbReference>
<dbReference type="GO" id="GO:0003677">
    <property type="term" value="F:DNA binding"/>
    <property type="evidence" value="ECO:0007669"/>
    <property type="project" value="UniProtKB-UniRule"/>
</dbReference>
<dbReference type="GO" id="GO:0003899">
    <property type="term" value="F:DNA-directed RNA polymerase activity"/>
    <property type="evidence" value="ECO:0007669"/>
    <property type="project" value="UniProtKB-UniRule"/>
</dbReference>
<dbReference type="GO" id="GO:0046983">
    <property type="term" value="F:protein dimerization activity"/>
    <property type="evidence" value="ECO:0007669"/>
    <property type="project" value="InterPro"/>
</dbReference>
<dbReference type="GO" id="GO:0006351">
    <property type="term" value="P:DNA-templated transcription"/>
    <property type="evidence" value="ECO:0007669"/>
    <property type="project" value="UniProtKB-UniRule"/>
</dbReference>
<dbReference type="CDD" id="cd06928">
    <property type="entry name" value="RNAP_alpha_NTD"/>
    <property type="match status" value="1"/>
</dbReference>
<dbReference type="FunFam" id="1.10.150.20:FF:000001">
    <property type="entry name" value="DNA-directed RNA polymerase subunit alpha"/>
    <property type="match status" value="1"/>
</dbReference>
<dbReference type="FunFam" id="2.170.120.12:FF:000001">
    <property type="entry name" value="DNA-directed RNA polymerase subunit alpha"/>
    <property type="match status" value="1"/>
</dbReference>
<dbReference type="Gene3D" id="1.10.150.20">
    <property type="entry name" value="5' to 3' exonuclease, C-terminal subdomain"/>
    <property type="match status" value="1"/>
</dbReference>
<dbReference type="Gene3D" id="2.170.120.12">
    <property type="entry name" value="DNA-directed RNA polymerase, insert domain"/>
    <property type="match status" value="1"/>
</dbReference>
<dbReference type="Gene3D" id="3.30.1360.10">
    <property type="entry name" value="RNA polymerase, RBP11-like subunit"/>
    <property type="match status" value="1"/>
</dbReference>
<dbReference type="HAMAP" id="MF_00059">
    <property type="entry name" value="RNApol_bact_RpoA"/>
    <property type="match status" value="1"/>
</dbReference>
<dbReference type="InterPro" id="IPR011262">
    <property type="entry name" value="DNA-dir_RNA_pol_insert"/>
</dbReference>
<dbReference type="InterPro" id="IPR011263">
    <property type="entry name" value="DNA-dir_RNA_pol_RpoA/D/Rpb3"/>
</dbReference>
<dbReference type="InterPro" id="IPR011773">
    <property type="entry name" value="DNA-dir_RpoA"/>
</dbReference>
<dbReference type="InterPro" id="IPR036603">
    <property type="entry name" value="RBP11-like"/>
</dbReference>
<dbReference type="InterPro" id="IPR011260">
    <property type="entry name" value="RNAP_asu_C"/>
</dbReference>
<dbReference type="InterPro" id="IPR036643">
    <property type="entry name" value="RNApol_insert_sf"/>
</dbReference>
<dbReference type="NCBIfam" id="NF003513">
    <property type="entry name" value="PRK05182.1-2"/>
    <property type="match status" value="1"/>
</dbReference>
<dbReference type="NCBIfam" id="NF003514">
    <property type="entry name" value="PRK05182.1-4"/>
    <property type="match status" value="1"/>
</dbReference>
<dbReference type="NCBIfam" id="NF003519">
    <property type="entry name" value="PRK05182.2-5"/>
    <property type="match status" value="1"/>
</dbReference>
<dbReference type="NCBIfam" id="TIGR02027">
    <property type="entry name" value="rpoA"/>
    <property type="match status" value="1"/>
</dbReference>
<dbReference type="Pfam" id="PF01000">
    <property type="entry name" value="RNA_pol_A_bac"/>
    <property type="match status" value="1"/>
</dbReference>
<dbReference type="Pfam" id="PF03118">
    <property type="entry name" value="RNA_pol_A_CTD"/>
    <property type="match status" value="1"/>
</dbReference>
<dbReference type="Pfam" id="PF01193">
    <property type="entry name" value="RNA_pol_L"/>
    <property type="match status" value="1"/>
</dbReference>
<dbReference type="SMART" id="SM00662">
    <property type="entry name" value="RPOLD"/>
    <property type="match status" value="1"/>
</dbReference>
<dbReference type="SUPFAM" id="SSF47789">
    <property type="entry name" value="C-terminal domain of RNA polymerase alpha subunit"/>
    <property type="match status" value="1"/>
</dbReference>
<dbReference type="SUPFAM" id="SSF56553">
    <property type="entry name" value="Insert subdomain of RNA polymerase alpha subunit"/>
    <property type="match status" value="1"/>
</dbReference>
<dbReference type="SUPFAM" id="SSF55257">
    <property type="entry name" value="RBP11-like subunits of RNA polymerase"/>
    <property type="match status" value="1"/>
</dbReference>
<organism>
    <name type="scientific">Nocardia farcinica (strain IFM 10152)</name>
    <dbReference type="NCBI Taxonomy" id="247156"/>
    <lineage>
        <taxon>Bacteria</taxon>
        <taxon>Bacillati</taxon>
        <taxon>Actinomycetota</taxon>
        <taxon>Actinomycetes</taxon>
        <taxon>Mycobacteriales</taxon>
        <taxon>Nocardiaceae</taxon>
        <taxon>Nocardia</taxon>
    </lineage>
</organism>
<comment type="function">
    <text evidence="1">DNA-dependent RNA polymerase catalyzes the transcription of DNA into RNA using the four ribonucleoside triphosphates as substrates.</text>
</comment>
<comment type="catalytic activity">
    <reaction evidence="1">
        <text>RNA(n) + a ribonucleoside 5'-triphosphate = RNA(n+1) + diphosphate</text>
        <dbReference type="Rhea" id="RHEA:21248"/>
        <dbReference type="Rhea" id="RHEA-COMP:14527"/>
        <dbReference type="Rhea" id="RHEA-COMP:17342"/>
        <dbReference type="ChEBI" id="CHEBI:33019"/>
        <dbReference type="ChEBI" id="CHEBI:61557"/>
        <dbReference type="ChEBI" id="CHEBI:140395"/>
        <dbReference type="EC" id="2.7.7.6"/>
    </reaction>
</comment>
<comment type="subunit">
    <text evidence="1">Homodimer. The RNAP catalytic core consists of 2 alpha, 1 beta, 1 beta' and 1 omega subunit. When a sigma factor is associated with the core the holoenzyme is formed, which can initiate transcription.</text>
</comment>
<comment type="domain">
    <text evidence="1">The N-terminal domain is essential for RNAP assembly and basal transcription, whereas the C-terminal domain is involved in interaction with transcriptional regulators and with upstream promoter elements.</text>
</comment>
<comment type="similarity">
    <text evidence="1">Belongs to the RNA polymerase alpha chain family.</text>
</comment>
<name>RPOA_NOCFA</name>
<sequence length="352" mass="37986">MLISQRPTLTEEVIAENRSKFTIEPLEPGFGYTLGNSLRRTLLSSIPGAAVTSIRIDGVLHEFTTVPGVKEDVTDIILNLKGLVVSSEEDEPVTMYVRKQGPGTVTAGDIVPPAGVVVHNPDMHIATLNDKGKLEIELVVERGRGYVPAVQNKASGAEIGRIPVDSIYSPVLKVTYKVEATRVEQRTDFDRLILDVETKNSISARDALASAGKTLVELFGLARELNVEAEGIEIGPSPAEADHIASFGLPIEDLDLTVRSYNCLKREGVHTVGELVARTESDLLDIRNFGQKSIDEVKVKLHALGLSLKDSPASFDPSSVVGYDASTGTWSDSGTFSDNDGGEQDYAETEQL</sequence>
<evidence type="ECO:0000255" key="1">
    <source>
        <dbReference type="HAMAP-Rule" id="MF_00059"/>
    </source>
</evidence>
<evidence type="ECO:0000256" key="2">
    <source>
        <dbReference type="SAM" id="MobiDB-lite"/>
    </source>
</evidence>